<evidence type="ECO:0000269" key="1">
    <source>
    </source>
</evidence>
<evidence type="ECO:0000269" key="2">
    <source>
    </source>
</evidence>
<evidence type="ECO:0000305" key="3"/>
<evidence type="ECO:0007829" key="4">
    <source>
        <dbReference type="PDB" id="1QWD"/>
    </source>
</evidence>
<evidence type="ECO:0007829" key="5">
    <source>
        <dbReference type="PDB" id="6UKK"/>
    </source>
</evidence>
<evidence type="ECO:0007829" key="6">
    <source>
        <dbReference type="PDB" id="7L5K"/>
    </source>
</evidence>
<keyword id="KW-0002">3D-structure</keyword>
<keyword id="KW-0998">Cell outer membrane</keyword>
<keyword id="KW-0446">Lipid-binding</keyword>
<keyword id="KW-0449">Lipoprotein</keyword>
<keyword id="KW-0472">Membrane</keyword>
<keyword id="KW-0564">Palmitate</keyword>
<keyword id="KW-1185">Reference proteome</keyword>
<keyword id="KW-0732">Signal</keyword>
<accession>P0A901</accession>
<accession>P39281</accession>
<accession>Q2M6F3</accession>
<dbReference type="EMBL" id="U21726">
    <property type="protein sequence ID" value="AAC46452.1"/>
    <property type="molecule type" value="Genomic_DNA"/>
</dbReference>
<dbReference type="EMBL" id="U14003">
    <property type="protein sequence ID" value="AAA97048.1"/>
    <property type="molecule type" value="Genomic_DNA"/>
</dbReference>
<dbReference type="EMBL" id="U00096">
    <property type="protein sequence ID" value="AAC77109.1"/>
    <property type="molecule type" value="Genomic_DNA"/>
</dbReference>
<dbReference type="EMBL" id="AP009048">
    <property type="protein sequence ID" value="BAE78153.1"/>
    <property type="molecule type" value="Genomic_DNA"/>
</dbReference>
<dbReference type="PIR" id="I84534">
    <property type="entry name" value="I84534"/>
</dbReference>
<dbReference type="RefSeq" id="NP_418573.1">
    <property type="nucleotide sequence ID" value="NC_000913.3"/>
</dbReference>
<dbReference type="RefSeq" id="WP_001238378.1">
    <property type="nucleotide sequence ID" value="NZ_LN832404.1"/>
</dbReference>
<dbReference type="PDB" id="1QWD">
    <property type="method" value="X-ray"/>
    <property type="resolution" value="1.75 A"/>
    <property type="chains" value="A/B=23-177"/>
</dbReference>
<dbReference type="PDB" id="2ACO">
    <property type="method" value="X-ray"/>
    <property type="resolution" value="1.80 A"/>
    <property type="chains" value="A/B=23-177"/>
</dbReference>
<dbReference type="PDB" id="3MBT">
    <property type="method" value="X-ray"/>
    <property type="resolution" value="2.60 A"/>
    <property type="chains" value="A=19-177"/>
</dbReference>
<dbReference type="PDB" id="6UKK">
    <property type="method" value="X-ray"/>
    <property type="resolution" value="1.60 A"/>
    <property type="chains" value="A=23-177"/>
</dbReference>
<dbReference type="PDB" id="7L5K">
    <property type="method" value="X-ray"/>
    <property type="resolution" value="1.86 A"/>
    <property type="chains" value="A/B=20-177"/>
</dbReference>
<dbReference type="PDB" id="7L5L">
    <property type="method" value="X-ray"/>
    <property type="resolution" value="2.01 A"/>
    <property type="chains" value="A/B=20-177"/>
</dbReference>
<dbReference type="PDBsum" id="1QWD"/>
<dbReference type="PDBsum" id="2ACO"/>
<dbReference type="PDBsum" id="3MBT"/>
<dbReference type="PDBsum" id="6UKK"/>
<dbReference type="PDBsum" id="7L5K"/>
<dbReference type="PDBsum" id="7L5L"/>
<dbReference type="SMR" id="P0A901"/>
<dbReference type="BioGRID" id="4261278">
    <property type="interactions" value="201"/>
</dbReference>
<dbReference type="DIP" id="DIP-35862N"/>
<dbReference type="FunCoup" id="P0A901">
    <property type="interactions" value="361"/>
</dbReference>
<dbReference type="IntAct" id="P0A901">
    <property type="interactions" value="6"/>
</dbReference>
<dbReference type="STRING" id="511145.b4149"/>
<dbReference type="jPOST" id="P0A901"/>
<dbReference type="PaxDb" id="511145-b4149"/>
<dbReference type="EnsemblBacteria" id="AAC77109">
    <property type="protein sequence ID" value="AAC77109"/>
    <property type="gene ID" value="b4149"/>
</dbReference>
<dbReference type="GeneID" id="75169670"/>
<dbReference type="GeneID" id="948670"/>
<dbReference type="KEGG" id="ecj:JW4110"/>
<dbReference type="KEGG" id="eco:b4149"/>
<dbReference type="KEGG" id="ecoc:C3026_22430"/>
<dbReference type="PATRIC" id="fig|1411691.4.peg.2549"/>
<dbReference type="EchoBASE" id="EB2367"/>
<dbReference type="eggNOG" id="COG3040">
    <property type="taxonomic scope" value="Bacteria"/>
</dbReference>
<dbReference type="HOGENOM" id="CLU_068449_3_0_6"/>
<dbReference type="InParanoid" id="P0A901"/>
<dbReference type="OMA" id="HKYLGRW"/>
<dbReference type="OrthoDB" id="9793905at2"/>
<dbReference type="PhylomeDB" id="P0A901"/>
<dbReference type="BioCyc" id="EcoCyc:G7837-MONOMER"/>
<dbReference type="EvolutionaryTrace" id="P0A901"/>
<dbReference type="PRO" id="PR:P0A901"/>
<dbReference type="Proteomes" id="UP000000625">
    <property type="component" value="Chromosome"/>
</dbReference>
<dbReference type="GO" id="GO:0009279">
    <property type="term" value="C:cell outer membrane"/>
    <property type="evidence" value="ECO:0007669"/>
    <property type="project" value="UniProtKB-SubCell"/>
</dbReference>
<dbReference type="GO" id="GO:0008289">
    <property type="term" value="F:lipid binding"/>
    <property type="evidence" value="ECO:0007669"/>
    <property type="project" value="UniProtKB-KW"/>
</dbReference>
<dbReference type="GO" id="GO:0006974">
    <property type="term" value="P:DNA damage response"/>
    <property type="evidence" value="ECO:0000270"/>
    <property type="project" value="EcoliWiki"/>
</dbReference>
<dbReference type="CDD" id="cd19438">
    <property type="entry name" value="lipocalin_Blc-like"/>
    <property type="match status" value="1"/>
</dbReference>
<dbReference type="FunFam" id="2.40.128.20:FF:000002">
    <property type="entry name" value="Outer membrane lipoprotein Blc"/>
    <property type="match status" value="1"/>
</dbReference>
<dbReference type="Gene3D" id="2.40.128.20">
    <property type="match status" value="1"/>
</dbReference>
<dbReference type="InterPro" id="IPR012674">
    <property type="entry name" value="Calycin"/>
</dbReference>
<dbReference type="InterPro" id="IPR022271">
    <property type="entry name" value="Lipocalin_ApoD"/>
</dbReference>
<dbReference type="InterPro" id="IPR002446">
    <property type="entry name" value="Lipocalin_bac"/>
</dbReference>
<dbReference type="InterPro" id="IPR047202">
    <property type="entry name" value="Lipocalin_Blc-like_dom"/>
</dbReference>
<dbReference type="InterPro" id="IPR022272">
    <property type="entry name" value="Lipocalin_CS"/>
</dbReference>
<dbReference type="InterPro" id="IPR000566">
    <property type="entry name" value="Lipocln_cytosolic_FA-bd_dom"/>
</dbReference>
<dbReference type="NCBIfam" id="NF007786">
    <property type="entry name" value="PRK10477.1"/>
    <property type="match status" value="1"/>
</dbReference>
<dbReference type="PANTHER" id="PTHR10612">
    <property type="entry name" value="APOLIPOPROTEIN D"/>
    <property type="match status" value="1"/>
</dbReference>
<dbReference type="PANTHER" id="PTHR10612:SF34">
    <property type="entry name" value="APOLIPOPROTEIN D"/>
    <property type="match status" value="1"/>
</dbReference>
<dbReference type="Pfam" id="PF08212">
    <property type="entry name" value="Lipocalin_2"/>
    <property type="match status" value="1"/>
</dbReference>
<dbReference type="PIRSF" id="PIRSF036893">
    <property type="entry name" value="Lipocalin_ApoD"/>
    <property type="match status" value="1"/>
</dbReference>
<dbReference type="PRINTS" id="PR01171">
    <property type="entry name" value="BCTLIPOCALIN"/>
</dbReference>
<dbReference type="SUPFAM" id="SSF50814">
    <property type="entry name" value="Lipocalins"/>
    <property type="match status" value="1"/>
</dbReference>
<dbReference type="PROSITE" id="PS00213">
    <property type="entry name" value="LIPOCALIN"/>
    <property type="match status" value="1"/>
</dbReference>
<dbReference type="PROSITE" id="PS51257">
    <property type="entry name" value="PROKAR_LIPOPROTEIN"/>
    <property type="match status" value="1"/>
</dbReference>
<comment type="function">
    <text evidence="1">Involved in the storage or transport of lipids necessary for membrane maintenance under stressful conditions. Displays a binding preference for lysophospholipids.</text>
</comment>
<comment type="subunit">
    <text evidence="2">Homodimer.</text>
</comment>
<comment type="subcellular location">
    <subcellularLocation>
        <location>Cell outer membrane</location>
        <topology>Lipid-anchor</topology>
    </subcellularLocation>
</comment>
<comment type="induction">
    <text>By starvation and high osmolarity.</text>
</comment>
<comment type="similarity">
    <text evidence="3">Belongs to the calycin superfamily. Lipocalin family.</text>
</comment>
<gene>
    <name type="primary">blc</name>
    <name type="synonym">yjeL</name>
    <name type="ordered locus">b4149</name>
    <name type="ordered locus">JW4110</name>
</gene>
<name>BLC_ECOLI</name>
<proteinExistence type="evidence at protein level"/>
<protein>
    <recommendedName>
        <fullName>Outer membrane lipoprotein Blc</fullName>
    </recommendedName>
</protein>
<reference key="1">
    <citation type="journal article" date="1995" name="J. Biol. Chem.">
        <title>Stationary phase expression of a novel Escherichia coli outer membrane lipoprotein and its relationship with mammalian apolipoprotein D. Implications for the origin of lipocalins.</title>
        <authorList>
            <person name="Bishop R.E."/>
            <person name="Penfold S.S."/>
            <person name="Frost L.S."/>
            <person name="Hoeltje J.-V."/>
            <person name="Weiner J.H."/>
        </authorList>
    </citation>
    <scope>NUCLEOTIDE SEQUENCE [GENOMIC DNA]</scope>
    <source>
        <strain>K12 / CS520</strain>
    </source>
</reference>
<reference key="2">
    <citation type="journal article" date="1995" name="Nucleic Acids Res.">
        <title>Analysis of the Escherichia coli genome VI: DNA sequence of the region from 92.8 through 100 minutes.</title>
        <authorList>
            <person name="Burland V.D."/>
            <person name="Plunkett G. III"/>
            <person name="Sofia H.J."/>
            <person name="Daniels D.L."/>
            <person name="Blattner F.R."/>
        </authorList>
    </citation>
    <scope>NUCLEOTIDE SEQUENCE [LARGE SCALE GENOMIC DNA]</scope>
    <source>
        <strain>K12 / MG1655 / ATCC 47076</strain>
    </source>
</reference>
<reference key="3">
    <citation type="journal article" date="1997" name="Science">
        <title>The complete genome sequence of Escherichia coli K-12.</title>
        <authorList>
            <person name="Blattner F.R."/>
            <person name="Plunkett G. III"/>
            <person name="Bloch C.A."/>
            <person name="Perna N.T."/>
            <person name="Burland V."/>
            <person name="Riley M."/>
            <person name="Collado-Vides J."/>
            <person name="Glasner J.D."/>
            <person name="Rode C.K."/>
            <person name="Mayhew G.F."/>
            <person name="Gregor J."/>
            <person name="Davis N.W."/>
            <person name="Kirkpatrick H.A."/>
            <person name="Goeden M.A."/>
            <person name="Rose D.J."/>
            <person name="Mau B."/>
            <person name="Shao Y."/>
        </authorList>
    </citation>
    <scope>NUCLEOTIDE SEQUENCE [LARGE SCALE GENOMIC DNA]</scope>
    <source>
        <strain>K12 / MG1655 / ATCC 47076</strain>
    </source>
</reference>
<reference key="4">
    <citation type="journal article" date="2006" name="Mol. Syst. Biol.">
        <title>Highly accurate genome sequences of Escherichia coli K-12 strains MG1655 and W3110.</title>
        <authorList>
            <person name="Hayashi K."/>
            <person name="Morooka N."/>
            <person name="Yamamoto Y."/>
            <person name="Fujita K."/>
            <person name="Isono K."/>
            <person name="Choi S."/>
            <person name="Ohtsubo E."/>
            <person name="Baba T."/>
            <person name="Wanner B.L."/>
            <person name="Mori H."/>
            <person name="Horiuchi T."/>
        </authorList>
    </citation>
    <scope>NUCLEOTIDE SEQUENCE [LARGE SCALE GENOMIC DNA]</scope>
    <source>
        <strain>K12 / W3110 / ATCC 27325 / DSM 5911</strain>
    </source>
</reference>
<reference key="5">
    <citation type="journal article" date="2004" name="FEBS Lett.">
        <title>The crystal structure of the Escherichia coli lipocalin Blc suggests a possible role in phospholipid binding.</title>
        <authorList>
            <person name="Campanacci V."/>
            <person name="Nurizzo D."/>
            <person name="Spinelli S."/>
            <person name="Valencia C."/>
            <person name="Tegoni M."/>
            <person name="Cambillau C."/>
        </authorList>
    </citation>
    <scope>X-RAY CRYSTALLOGRAPHY (1.75 ANGSTROMS) OF 23-177</scope>
    <scope>FUNCTION</scope>
</reference>
<reference key="6">
    <citation type="journal article" date="2006" name="FEBS Lett.">
        <title>The membrane bound bacterial lipocalin Blc is a functional dimer with binding preference for lysophospholipids.</title>
        <authorList>
            <person name="Campanacci V."/>
            <person name="Bishop R.E."/>
            <person name="Blangy S."/>
            <person name="Tegoni M."/>
            <person name="Cambillau C."/>
        </authorList>
    </citation>
    <scope>X-RAY CRYSTALLOGRAPHY (1.8 ANGSTROMS) OF 23-177 IN COMPLEX WITH VACCENIC ACID</scope>
    <scope>SUBSTRATE SPECIFICITY</scope>
    <scope>SUBUNIT</scope>
</reference>
<feature type="signal peptide" evidence="3">
    <location>
        <begin position="1"/>
        <end position="18"/>
    </location>
</feature>
<feature type="chain" id="PRO_0000017991" description="Outer membrane lipoprotein Blc">
    <location>
        <begin position="19"/>
        <end position="177"/>
    </location>
</feature>
<feature type="lipid moiety-binding region" description="N-palmitoyl cysteine" evidence="3">
    <location>
        <position position="19"/>
    </location>
</feature>
<feature type="lipid moiety-binding region" description="S-diacylglycerol cysteine" evidence="3">
    <location>
        <position position="19"/>
    </location>
</feature>
<feature type="strand" evidence="4">
    <location>
        <begin position="28"/>
        <end position="33"/>
    </location>
</feature>
<feature type="helix" evidence="5">
    <location>
        <begin position="36"/>
        <end position="39"/>
    </location>
</feature>
<feature type="strand" evidence="5">
    <location>
        <begin position="41"/>
        <end position="44"/>
    </location>
</feature>
<feature type="turn" evidence="5">
    <location>
        <begin position="52"/>
        <end position="56"/>
    </location>
</feature>
<feature type="strand" evidence="5">
    <location>
        <begin position="58"/>
        <end position="66"/>
    </location>
</feature>
<feature type="strand" evidence="5">
    <location>
        <begin position="72"/>
        <end position="80"/>
    </location>
</feature>
<feature type="turn" evidence="5">
    <location>
        <begin position="81"/>
        <end position="84"/>
    </location>
</feature>
<feature type="strand" evidence="5">
    <location>
        <begin position="85"/>
        <end position="97"/>
    </location>
</feature>
<feature type="strand" evidence="5">
    <location>
        <begin position="104"/>
        <end position="108"/>
    </location>
</feature>
<feature type="strand" evidence="5">
    <location>
        <begin position="117"/>
        <end position="121"/>
    </location>
</feature>
<feature type="strand" evidence="5">
    <location>
        <begin position="127"/>
        <end position="131"/>
    </location>
</feature>
<feature type="strand" evidence="5">
    <location>
        <begin position="138"/>
        <end position="145"/>
    </location>
</feature>
<feature type="helix" evidence="5">
    <location>
        <begin position="149"/>
        <end position="161"/>
    </location>
</feature>
<feature type="helix" evidence="5">
    <location>
        <begin position="166"/>
        <end position="168"/>
    </location>
</feature>
<feature type="strand" evidence="6">
    <location>
        <begin position="169"/>
        <end position="171"/>
    </location>
</feature>
<organism>
    <name type="scientific">Escherichia coli (strain K12)</name>
    <dbReference type="NCBI Taxonomy" id="83333"/>
    <lineage>
        <taxon>Bacteria</taxon>
        <taxon>Pseudomonadati</taxon>
        <taxon>Pseudomonadota</taxon>
        <taxon>Gammaproteobacteria</taxon>
        <taxon>Enterobacterales</taxon>
        <taxon>Enterobacteriaceae</taxon>
        <taxon>Escherichia</taxon>
    </lineage>
</organism>
<sequence>MRLLPLVAAATAAFLVVACSSPTPPRGVTVVNNFDAKRYLGTWYEIARFDHRFERGLEKVTATYSLRDDGGLNVINKGYNPDRGMWQQSEGKAYFTGAPTRAALKVSFFGPFYGGYNVIALDREYRHALVCGPDRDYLWILSRTPTISDEVKQEMLAVATREGFDVSKFIWVQQPGS</sequence>